<name>PLSY1_BACHK</name>
<feature type="chain" id="PRO_0000188327" description="Glycerol-3-phosphate acyltransferase 1">
    <location>
        <begin position="1"/>
        <end position="182"/>
    </location>
</feature>
<feature type="transmembrane region" description="Helical" evidence="1">
    <location>
        <begin position="5"/>
        <end position="25"/>
    </location>
</feature>
<feature type="transmembrane region" description="Helical" evidence="1">
    <location>
        <begin position="54"/>
        <end position="74"/>
    </location>
</feature>
<feature type="transmembrane region" description="Helical" evidence="1">
    <location>
        <begin position="81"/>
        <end position="101"/>
    </location>
</feature>
<feature type="transmembrane region" description="Helical" evidence="1">
    <location>
        <begin position="117"/>
        <end position="137"/>
    </location>
</feature>
<feature type="transmembrane region" description="Helical" evidence="1">
    <location>
        <begin position="157"/>
        <end position="177"/>
    </location>
</feature>
<evidence type="ECO:0000255" key="1">
    <source>
        <dbReference type="HAMAP-Rule" id="MF_01043"/>
    </source>
</evidence>
<comment type="function">
    <text evidence="1">Catalyzes the transfer of an acyl group from acyl-phosphate (acyl-PO(4)) to glycerol-3-phosphate (G3P) to form lysophosphatidic acid (LPA). This enzyme utilizes acyl-phosphate as fatty acyl donor, but not acyl-CoA or acyl-ACP.</text>
</comment>
<comment type="catalytic activity">
    <reaction evidence="1">
        <text>an acyl phosphate + sn-glycerol 3-phosphate = a 1-acyl-sn-glycero-3-phosphate + phosphate</text>
        <dbReference type="Rhea" id="RHEA:34075"/>
        <dbReference type="ChEBI" id="CHEBI:43474"/>
        <dbReference type="ChEBI" id="CHEBI:57597"/>
        <dbReference type="ChEBI" id="CHEBI:57970"/>
        <dbReference type="ChEBI" id="CHEBI:59918"/>
        <dbReference type="EC" id="2.3.1.275"/>
    </reaction>
</comment>
<comment type="pathway">
    <text evidence="1">Lipid metabolism; phospholipid metabolism.</text>
</comment>
<comment type="subunit">
    <text evidence="1">Probably interacts with PlsX.</text>
</comment>
<comment type="subcellular location">
    <subcellularLocation>
        <location evidence="1">Cell membrane</location>
        <topology evidence="1">Multi-pass membrane protein</topology>
    </subcellularLocation>
</comment>
<comment type="similarity">
    <text evidence="1">Belongs to the PlsY family.</text>
</comment>
<sequence length="182" mass="20180">MINSMQFLYLVASYLFGNILTAYIVTKWRHNVDIRDEGSGNPGARNMGRVYGKGYFVATFLGDAIKGAIVVSIAKYLFEDSTFLMLTLLAVIMGHIYPILFKGKGGKGISTFIGGLIAFDYLIALTLVTVFIIFYLIFKGFTKPGLITIACLPLCMILYSYSIVTTILSVLIIVLILYVNRE</sequence>
<accession>Q6HIP2</accession>
<organism>
    <name type="scientific">Bacillus thuringiensis subsp. konkukian (strain 97-27)</name>
    <dbReference type="NCBI Taxonomy" id="281309"/>
    <lineage>
        <taxon>Bacteria</taxon>
        <taxon>Bacillati</taxon>
        <taxon>Bacillota</taxon>
        <taxon>Bacilli</taxon>
        <taxon>Bacillales</taxon>
        <taxon>Bacillaceae</taxon>
        <taxon>Bacillus</taxon>
        <taxon>Bacillus cereus group</taxon>
    </lineage>
</organism>
<proteinExistence type="inferred from homology"/>
<reference key="1">
    <citation type="journal article" date="2006" name="J. Bacteriol.">
        <title>Pathogenomic sequence analysis of Bacillus cereus and Bacillus thuringiensis isolates closely related to Bacillus anthracis.</title>
        <authorList>
            <person name="Han C.S."/>
            <person name="Xie G."/>
            <person name="Challacombe J.F."/>
            <person name="Altherr M.R."/>
            <person name="Bhotika S.S."/>
            <person name="Bruce D."/>
            <person name="Campbell C.S."/>
            <person name="Campbell M.L."/>
            <person name="Chen J."/>
            <person name="Chertkov O."/>
            <person name="Cleland C."/>
            <person name="Dimitrijevic M."/>
            <person name="Doggett N.A."/>
            <person name="Fawcett J.J."/>
            <person name="Glavina T."/>
            <person name="Goodwin L.A."/>
            <person name="Hill K.K."/>
            <person name="Hitchcock P."/>
            <person name="Jackson P.J."/>
            <person name="Keim P."/>
            <person name="Kewalramani A.R."/>
            <person name="Longmire J."/>
            <person name="Lucas S."/>
            <person name="Malfatti S."/>
            <person name="McMurry K."/>
            <person name="Meincke L.J."/>
            <person name="Misra M."/>
            <person name="Moseman B.L."/>
            <person name="Mundt M."/>
            <person name="Munk A.C."/>
            <person name="Okinaka R.T."/>
            <person name="Parson-Quintana B."/>
            <person name="Reilly L.P."/>
            <person name="Richardson P."/>
            <person name="Robinson D.L."/>
            <person name="Rubin E."/>
            <person name="Saunders E."/>
            <person name="Tapia R."/>
            <person name="Tesmer J.G."/>
            <person name="Thayer N."/>
            <person name="Thompson L.S."/>
            <person name="Tice H."/>
            <person name="Ticknor L.O."/>
            <person name="Wills P.L."/>
            <person name="Brettin T.S."/>
            <person name="Gilna P."/>
        </authorList>
    </citation>
    <scope>NUCLEOTIDE SEQUENCE [LARGE SCALE GENOMIC DNA]</scope>
    <source>
        <strain>97-27</strain>
    </source>
</reference>
<dbReference type="EC" id="2.3.1.275" evidence="1"/>
<dbReference type="EMBL" id="AE017355">
    <property type="protein sequence ID" value="AAT59912.1"/>
    <property type="molecule type" value="Genomic_DNA"/>
</dbReference>
<dbReference type="RefSeq" id="YP_036584.1">
    <property type="nucleotide sequence ID" value="NC_005957.1"/>
</dbReference>
<dbReference type="SMR" id="Q6HIP2"/>
<dbReference type="KEGG" id="btk:BT9727_2258"/>
<dbReference type="PATRIC" id="fig|281309.8.peg.2385"/>
<dbReference type="HOGENOM" id="CLU_081254_7_0_9"/>
<dbReference type="UniPathway" id="UPA00085"/>
<dbReference type="Proteomes" id="UP000001301">
    <property type="component" value="Chromosome"/>
</dbReference>
<dbReference type="GO" id="GO:0005886">
    <property type="term" value="C:plasma membrane"/>
    <property type="evidence" value="ECO:0007669"/>
    <property type="project" value="UniProtKB-SubCell"/>
</dbReference>
<dbReference type="GO" id="GO:0043772">
    <property type="term" value="F:acyl-phosphate glycerol-3-phosphate acyltransferase activity"/>
    <property type="evidence" value="ECO:0007669"/>
    <property type="project" value="UniProtKB-UniRule"/>
</dbReference>
<dbReference type="GO" id="GO:0008654">
    <property type="term" value="P:phospholipid biosynthetic process"/>
    <property type="evidence" value="ECO:0007669"/>
    <property type="project" value="UniProtKB-UniRule"/>
</dbReference>
<dbReference type="HAMAP" id="MF_01043">
    <property type="entry name" value="PlsY"/>
    <property type="match status" value="1"/>
</dbReference>
<dbReference type="InterPro" id="IPR003811">
    <property type="entry name" value="G3P_acylTferase_PlsY"/>
</dbReference>
<dbReference type="NCBIfam" id="NF001254">
    <property type="entry name" value="PRK00220.2-1"/>
    <property type="match status" value="1"/>
</dbReference>
<dbReference type="PANTHER" id="PTHR30309:SF0">
    <property type="entry name" value="GLYCEROL-3-PHOSPHATE ACYLTRANSFERASE-RELATED"/>
    <property type="match status" value="1"/>
</dbReference>
<dbReference type="PANTHER" id="PTHR30309">
    <property type="entry name" value="INNER MEMBRANE PROTEIN YGIH"/>
    <property type="match status" value="1"/>
</dbReference>
<dbReference type="Pfam" id="PF02660">
    <property type="entry name" value="G3P_acyltransf"/>
    <property type="match status" value="1"/>
</dbReference>
<dbReference type="SMART" id="SM01207">
    <property type="entry name" value="G3P_acyltransf"/>
    <property type="match status" value="1"/>
</dbReference>
<keyword id="KW-1003">Cell membrane</keyword>
<keyword id="KW-0444">Lipid biosynthesis</keyword>
<keyword id="KW-0443">Lipid metabolism</keyword>
<keyword id="KW-0472">Membrane</keyword>
<keyword id="KW-0594">Phospholipid biosynthesis</keyword>
<keyword id="KW-1208">Phospholipid metabolism</keyword>
<keyword id="KW-0808">Transferase</keyword>
<keyword id="KW-0812">Transmembrane</keyword>
<keyword id="KW-1133">Transmembrane helix</keyword>
<gene>
    <name evidence="1" type="primary">plsY1</name>
    <name type="ordered locus">BT9727_2258</name>
</gene>
<protein>
    <recommendedName>
        <fullName evidence="1">Glycerol-3-phosphate acyltransferase 1</fullName>
    </recommendedName>
    <alternativeName>
        <fullName evidence="1">Acyl-PO4 G3P acyltransferase 1</fullName>
    </alternativeName>
    <alternativeName>
        <fullName evidence="1">Acyl-phosphate--glycerol-3-phosphate acyltransferase 1</fullName>
    </alternativeName>
    <alternativeName>
        <fullName evidence="1">G3P acyltransferase 1</fullName>
        <shortName evidence="1">GPAT 1</shortName>
        <ecNumber evidence="1">2.3.1.275</ecNumber>
    </alternativeName>
    <alternativeName>
        <fullName evidence="1">Lysophosphatidic acid synthase 1</fullName>
        <shortName evidence="1">LPA synthase 1</shortName>
    </alternativeName>
</protein>